<protein>
    <recommendedName>
        <fullName>Ferric uptake regulation protein</fullName>
        <shortName>Ferric uptake regulator</shortName>
    </recommendedName>
</protein>
<reference key="1">
    <citation type="journal article" date="1997" name="Microbiol. Immunol.">
        <title>Cloning and sequencing of the Vibrio parahaemolyticus fur gene.</title>
        <authorList>
            <person name="Yamamoto S."/>
            <person name="Funahashi T."/>
            <person name="Ikai F."/>
            <person name="Shinoda S."/>
        </authorList>
    </citation>
    <scope>NUCLEOTIDE SEQUENCE [GENOMIC DNA]</scope>
    <source>
        <strain>RIMD WP1</strain>
    </source>
</reference>
<reference key="2">
    <citation type="journal article" date="2003" name="Lancet">
        <title>Genome sequence of Vibrio parahaemolyticus: a pathogenic mechanism distinct from that of V. cholerae.</title>
        <authorList>
            <person name="Makino K."/>
            <person name="Oshima K."/>
            <person name="Kurokawa K."/>
            <person name="Yokoyama K."/>
            <person name="Uda T."/>
            <person name="Tagomori K."/>
            <person name="Iijima Y."/>
            <person name="Najima M."/>
            <person name="Nakano M."/>
            <person name="Yamashita A."/>
            <person name="Kubota Y."/>
            <person name="Kimura S."/>
            <person name="Yasunaga T."/>
            <person name="Honda T."/>
            <person name="Shinagawa H."/>
            <person name="Hattori M."/>
            <person name="Iida T."/>
        </authorList>
    </citation>
    <scope>NUCLEOTIDE SEQUENCE [LARGE SCALE GENOMIC DNA]</scope>
    <source>
        <strain>RIMD 2210633</strain>
    </source>
</reference>
<name>FUR_VIBPA</name>
<evidence type="ECO:0000250" key="1"/>
<evidence type="ECO:0000305" key="2"/>
<feature type="chain" id="PRO_0000095586" description="Ferric uptake regulation protein">
    <location>
        <begin position="1"/>
        <end position="149"/>
    </location>
</feature>
<feature type="region of interest" description="DNA-binding" evidence="1">
    <location>
        <begin position="1"/>
        <end position="84"/>
    </location>
</feature>
<feature type="region of interest" description="Dimerization" evidence="1">
    <location>
        <begin position="85"/>
        <end position="142"/>
    </location>
</feature>
<feature type="binding site" evidence="1">
    <location>
        <position position="33"/>
    </location>
    <ligand>
        <name>Zn(2+)</name>
        <dbReference type="ChEBI" id="CHEBI:29105"/>
    </ligand>
</feature>
<feature type="binding site" evidence="1">
    <location>
        <position position="81"/>
    </location>
    <ligand>
        <name>Zn(2+)</name>
        <dbReference type="ChEBI" id="CHEBI:29105"/>
    </ligand>
</feature>
<feature type="binding site" evidence="1">
    <location>
        <position position="87"/>
    </location>
    <ligand>
        <name>Fe cation</name>
        <dbReference type="ChEBI" id="CHEBI:24875"/>
    </ligand>
</feature>
<feature type="binding site" evidence="1">
    <location>
        <position position="89"/>
    </location>
    <ligand>
        <name>Fe cation</name>
        <dbReference type="ChEBI" id="CHEBI:24875"/>
    </ligand>
</feature>
<feature type="binding site" evidence="1">
    <location>
        <position position="90"/>
    </location>
    <ligand>
        <name>Zn(2+)</name>
        <dbReference type="ChEBI" id="CHEBI:29105"/>
    </ligand>
</feature>
<feature type="binding site" evidence="1">
    <location>
        <position position="93"/>
    </location>
    <ligand>
        <name>Zn(2+)</name>
        <dbReference type="ChEBI" id="CHEBI:29105"/>
    </ligand>
</feature>
<feature type="binding site" evidence="1">
    <location>
        <position position="96"/>
    </location>
    <ligand>
        <name>Zn(2+)</name>
        <dbReference type="ChEBI" id="CHEBI:29105"/>
    </ligand>
</feature>
<feature type="binding site" evidence="1">
    <location>
        <position position="101"/>
    </location>
    <ligand>
        <name>Zn(2+)</name>
        <dbReference type="ChEBI" id="CHEBI:29105"/>
    </ligand>
</feature>
<feature type="binding site" evidence="1">
    <location>
        <position position="108"/>
    </location>
    <ligand>
        <name>Fe cation</name>
        <dbReference type="ChEBI" id="CHEBI:24875"/>
    </ligand>
</feature>
<feature type="binding site" evidence="1">
    <location>
        <position position="125"/>
    </location>
    <ligand>
        <name>Fe cation</name>
        <dbReference type="ChEBI" id="CHEBI:24875"/>
    </ligand>
</feature>
<comment type="function">
    <text>Fur acts as a repressor, employing Fe(2+) as a cofactor to bind the operator of the iron transport operon.</text>
</comment>
<comment type="subunit">
    <text evidence="1">Homodimer.</text>
</comment>
<comment type="subcellular location">
    <subcellularLocation>
        <location evidence="1">Cytoplasm</location>
    </subcellularLocation>
</comment>
<comment type="similarity">
    <text evidence="2">Belongs to the Fur family.</text>
</comment>
<sequence length="149" mass="16771">MSDNNQALKDAGLKVTLPRLKILEVLQQPDCQHISAEDLYKKLIDLGEEIGLATVYRVLNQFDDAGIVTRHHFEGGKSVFELSTQHHHDHLVCLDCGEVIEFSDDIIEERQREIAAKYNVTLTNHSLYLYGKCSDGGCKENPDAHKPAK</sequence>
<dbReference type="EMBL" id="AB003752">
    <property type="protein sequence ID" value="BAA22785.1"/>
    <property type="molecule type" value="Genomic_DNA"/>
</dbReference>
<dbReference type="EMBL" id="BA000031">
    <property type="protein sequence ID" value="BAC59096.1"/>
    <property type="molecule type" value="Genomic_DNA"/>
</dbReference>
<dbReference type="RefSeq" id="NP_797212.1">
    <property type="nucleotide sequence ID" value="NC_004603.1"/>
</dbReference>
<dbReference type="SMR" id="O24755"/>
<dbReference type="GeneID" id="1188330"/>
<dbReference type="KEGG" id="vpa:VP0833"/>
<dbReference type="PATRIC" id="fig|223926.6.peg.789"/>
<dbReference type="eggNOG" id="COG0735">
    <property type="taxonomic scope" value="Bacteria"/>
</dbReference>
<dbReference type="HOGENOM" id="CLU_096072_3_3_6"/>
<dbReference type="Proteomes" id="UP000002493">
    <property type="component" value="Chromosome 1"/>
</dbReference>
<dbReference type="GO" id="GO:0005829">
    <property type="term" value="C:cytosol"/>
    <property type="evidence" value="ECO:0007669"/>
    <property type="project" value="TreeGrafter"/>
</dbReference>
<dbReference type="GO" id="GO:0003700">
    <property type="term" value="F:DNA-binding transcription factor activity"/>
    <property type="evidence" value="ECO:0007669"/>
    <property type="project" value="InterPro"/>
</dbReference>
<dbReference type="GO" id="GO:0000976">
    <property type="term" value="F:transcription cis-regulatory region binding"/>
    <property type="evidence" value="ECO:0007669"/>
    <property type="project" value="TreeGrafter"/>
</dbReference>
<dbReference type="GO" id="GO:0008270">
    <property type="term" value="F:zinc ion binding"/>
    <property type="evidence" value="ECO:0007669"/>
    <property type="project" value="TreeGrafter"/>
</dbReference>
<dbReference type="GO" id="GO:0045892">
    <property type="term" value="P:negative regulation of DNA-templated transcription"/>
    <property type="evidence" value="ECO:0007669"/>
    <property type="project" value="TreeGrafter"/>
</dbReference>
<dbReference type="GO" id="GO:1900705">
    <property type="term" value="P:negative regulation of siderophore biosynthetic process"/>
    <property type="evidence" value="ECO:0007669"/>
    <property type="project" value="TreeGrafter"/>
</dbReference>
<dbReference type="CDD" id="cd07153">
    <property type="entry name" value="Fur_like"/>
    <property type="match status" value="1"/>
</dbReference>
<dbReference type="FunFam" id="1.10.10.10:FF:000007">
    <property type="entry name" value="Ferric uptake regulation protein"/>
    <property type="match status" value="1"/>
</dbReference>
<dbReference type="FunFam" id="3.30.1490.190:FF:000001">
    <property type="entry name" value="Ferric uptake regulation protein"/>
    <property type="match status" value="1"/>
</dbReference>
<dbReference type="Gene3D" id="3.30.1490.190">
    <property type="match status" value="1"/>
</dbReference>
<dbReference type="Gene3D" id="1.10.10.10">
    <property type="entry name" value="Winged helix-like DNA-binding domain superfamily/Winged helix DNA-binding domain"/>
    <property type="match status" value="1"/>
</dbReference>
<dbReference type="InterPro" id="IPR002481">
    <property type="entry name" value="FUR"/>
</dbReference>
<dbReference type="InterPro" id="IPR043135">
    <property type="entry name" value="Fur_C"/>
</dbReference>
<dbReference type="InterPro" id="IPR036388">
    <property type="entry name" value="WH-like_DNA-bd_sf"/>
</dbReference>
<dbReference type="InterPro" id="IPR036390">
    <property type="entry name" value="WH_DNA-bd_sf"/>
</dbReference>
<dbReference type="NCBIfam" id="NF006999">
    <property type="entry name" value="PRK09462.1"/>
    <property type="match status" value="1"/>
</dbReference>
<dbReference type="PANTHER" id="PTHR33202:SF2">
    <property type="entry name" value="FERRIC UPTAKE REGULATION PROTEIN"/>
    <property type="match status" value="1"/>
</dbReference>
<dbReference type="PANTHER" id="PTHR33202">
    <property type="entry name" value="ZINC UPTAKE REGULATION PROTEIN"/>
    <property type="match status" value="1"/>
</dbReference>
<dbReference type="Pfam" id="PF01475">
    <property type="entry name" value="FUR"/>
    <property type="match status" value="1"/>
</dbReference>
<dbReference type="SUPFAM" id="SSF46785">
    <property type="entry name" value="Winged helix' DNA-binding domain"/>
    <property type="match status" value="1"/>
</dbReference>
<keyword id="KW-0963">Cytoplasm</keyword>
<keyword id="KW-0238">DNA-binding</keyword>
<keyword id="KW-0408">Iron</keyword>
<keyword id="KW-0479">Metal-binding</keyword>
<keyword id="KW-0678">Repressor</keyword>
<keyword id="KW-0804">Transcription</keyword>
<keyword id="KW-0805">Transcription regulation</keyword>
<keyword id="KW-0862">Zinc</keyword>
<gene>
    <name type="primary">fur</name>
    <name type="ordered locus">VP0833</name>
</gene>
<proteinExistence type="inferred from homology"/>
<accession>O24755</accession>
<organism>
    <name type="scientific">Vibrio parahaemolyticus serotype O3:K6 (strain RIMD 2210633)</name>
    <dbReference type="NCBI Taxonomy" id="223926"/>
    <lineage>
        <taxon>Bacteria</taxon>
        <taxon>Pseudomonadati</taxon>
        <taxon>Pseudomonadota</taxon>
        <taxon>Gammaproteobacteria</taxon>
        <taxon>Vibrionales</taxon>
        <taxon>Vibrionaceae</taxon>
        <taxon>Vibrio</taxon>
    </lineage>
</organism>